<keyword id="KW-0249">Electron transport</keyword>
<keyword id="KW-0472">Membrane</keyword>
<keyword id="KW-0496">Mitochondrion</keyword>
<keyword id="KW-0999">Mitochondrion inner membrane</keyword>
<keyword id="KW-0520">NAD</keyword>
<keyword id="KW-0679">Respiratory chain</keyword>
<keyword id="KW-1278">Translocase</keyword>
<keyword id="KW-0812">Transmembrane</keyword>
<keyword id="KW-1133">Transmembrane helix</keyword>
<keyword id="KW-0813">Transport</keyword>
<keyword id="KW-0830">Ubiquinone</keyword>
<feature type="chain" id="PRO_0000117773" description="NADH-ubiquinone oxidoreductase chain 3">
    <location>
        <begin position="1"/>
        <end position="115"/>
    </location>
</feature>
<feature type="transmembrane region" description="Helical" evidence="3">
    <location>
        <begin position="4"/>
        <end position="24"/>
    </location>
</feature>
<feature type="transmembrane region" description="Helical" evidence="3">
    <location>
        <begin position="55"/>
        <end position="75"/>
    </location>
</feature>
<feature type="transmembrane region" description="Helical" evidence="3">
    <location>
        <begin position="84"/>
        <end position="104"/>
    </location>
</feature>
<geneLocation type="mitochondrion"/>
<gene>
    <name evidence="1" type="primary">MT-ND3</name>
    <name type="synonym">MTND3</name>
    <name type="synonym">NADH3</name>
    <name type="synonym">ND3</name>
</gene>
<dbReference type="EC" id="7.1.1.2" evidence="1"/>
<dbReference type="EMBL" id="U83830">
    <property type="protein sequence ID" value="AAB87208.1"/>
    <property type="molecule type" value="Genomic_DNA"/>
</dbReference>
<dbReference type="SMR" id="O21587"/>
<dbReference type="GO" id="GO:0005743">
    <property type="term" value="C:mitochondrial inner membrane"/>
    <property type="evidence" value="ECO:0000250"/>
    <property type="project" value="UniProtKB"/>
</dbReference>
<dbReference type="GO" id="GO:0030964">
    <property type="term" value="C:NADH dehydrogenase complex"/>
    <property type="evidence" value="ECO:0007669"/>
    <property type="project" value="TreeGrafter"/>
</dbReference>
<dbReference type="GO" id="GO:0008137">
    <property type="term" value="F:NADH dehydrogenase (ubiquinone) activity"/>
    <property type="evidence" value="ECO:0000250"/>
    <property type="project" value="UniProtKB"/>
</dbReference>
<dbReference type="GO" id="GO:0006120">
    <property type="term" value="P:mitochondrial electron transport, NADH to ubiquinone"/>
    <property type="evidence" value="ECO:0000250"/>
    <property type="project" value="UniProtKB"/>
</dbReference>
<dbReference type="FunFam" id="1.20.58.1610:FF:000004">
    <property type="entry name" value="NADH-quinone oxidoreductase subunit A"/>
    <property type="match status" value="1"/>
</dbReference>
<dbReference type="Gene3D" id="1.20.58.1610">
    <property type="entry name" value="NADH:ubiquinone/plastoquinone oxidoreductase, chain 3"/>
    <property type="match status" value="1"/>
</dbReference>
<dbReference type="InterPro" id="IPR000440">
    <property type="entry name" value="NADH_UbQ/plastoQ_OxRdtase_su3"/>
</dbReference>
<dbReference type="InterPro" id="IPR038430">
    <property type="entry name" value="NDAH_ubi_oxred_su3_sf"/>
</dbReference>
<dbReference type="PANTHER" id="PTHR11058">
    <property type="entry name" value="NADH-UBIQUINONE OXIDOREDUCTASE CHAIN 3"/>
    <property type="match status" value="1"/>
</dbReference>
<dbReference type="PANTHER" id="PTHR11058:SF9">
    <property type="entry name" value="NADH-UBIQUINONE OXIDOREDUCTASE CHAIN 3"/>
    <property type="match status" value="1"/>
</dbReference>
<dbReference type="Pfam" id="PF00507">
    <property type="entry name" value="Oxidored_q4"/>
    <property type="match status" value="1"/>
</dbReference>
<accession>O21587</accession>
<name>NU3M_OCHNU</name>
<proteinExistence type="inferred from homology"/>
<organism>
    <name type="scientific">Ochrotomys nuttalli</name>
    <name type="common">Golden mouse</name>
    <name type="synonym">Peromyscus nuttalli</name>
    <dbReference type="NCBI Taxonomy" id="56229"/>
    <lineage>
        <taxon>Eukaryota</taxon>
        <taxon>Metazoa</taxon>
        <taxon>Chordata</taxon>
        <taxon>Craniata</taxon>
        <taxon>Vertebrata</taxon>
        <taxon>Euteleostomi</taxon>
        <taxon>Mammalia</taxon>
        <taxon>Eutheria</taxon>
        <taxon>Euarchontoglires</taxon>
        <taxon>Glires</taxon>
        <taxon>Rodentia</taxon>
        <taxon>Myomorpha</taxon>
        <taxon>Muroidea</taxon>
        <taxon>Cricetidae</taxon>
        <taxon>Neotominae</taxon>
        <taxon>Ochrotomys</taxon>
    </lineage>
</organism>
<evidence type="ECO:0000250" key="1">
    <source>
        <dbReference type="UniProtKB" id="P03897"/>
    </source>
</evidence>
<evidence type="ECO:0000250" key="2">
    <source>
        <dbReference type="UniProtKB" id="P03898"/>
    </source>
</evidence>
<evidence type="ECO:0000255" key="3"/>
<evidence type="ECO:0000305" key="4"/>
<reference key="1">
    <citation type="journal article" date="1998" name="Mol. Biol. Evol.">
        <title>Molecular systematics and paleobiogeography of the South American sigmodontine rodents.</title>
        <authorList>
            <person name="Engel S.R."/>
            <person name="Hogan K.M."/>
            <person name="Taylor J.F."/>
            <person name="Davis S.K."/>
        </authorList>
    </citation>
    <scope>NUCLEOTIDE SEQUENCE [GENOMIC DNA]</scope>
</reference>
<sequence length="115" mass="13065">MNMLLVIAVNTILSLILITVAFWLPQLNIYTEKANPYECGFDPMSSARLPFSMKFFLVAITFLLFDLEIALLLPIPWAIQTPHINMVLPTALILLTILALGLAYEWLQKGLEWTE</sequence>
<comment type="function">
    <text evidence="1">Core subunit of the mitochondrial membrane respiratory chain NADH dehydrogenase (Complex I) which catalyzes electron transfer from NADH through the respiratory chain, using ubiquinone as an electron acceptor. Essential for the catalytic activity of complex I.</text>
</comment>
<comment type="catalytic activity">
    <reaction evidence="1">
        <text>a ubiquinone + NADH + 5 H(+)(in) = a ubiquinol + NAD(+) + 4 H(+)(out)</text>
        <dbReference type="Rhea" id="RHEA:29091"/>
        <dbReference type="Rhea" id="RHEA-COMP:9565"/>
        <dbReference type="Rhea" id="RHEA-COMP:9566"/>
        <dbReference type="ChEBI" id="CHEBI:15378"/>
        <dbReference type="ChEBI" id="CHEBI:16389"/>
        <dbReference type="ChEBI" id="CHEBI:17976"/>
        <dbReference type="ChEBI" id="CHEBI:57540"/>
        <dbReference type="ChEBI" id="CHEBI:57945"/>
        <dbReference type="EC" id="7.1.1.2"/>
    </reaction>
</comment>
<comment type="subunit">
    <text evidence="1">Core subunit of respiratory chain NADH dehydrogenase (Complex I) which is composed of 45 different subunits. Interacts with TMEM186. Interacts with TMEM242 (By similarity).</text>
</comment>
<comment type="subcellular location">
    <subcellularLocation>
        <location evidence="2">Mitochondrion inner membrane</location>
        <topology evidence="3">Multi-pass membrane protein</topology>
    </subcellularLocation>
</comment>
<comment type="similarity">
    <text evidence="4">Belongs to the complex I subunit 3 family.</text>
</comment>
<protein>
    <recommendedName>
        <fullName evidence="1">NADH-ubiquinone oxidoreductase chain 3</fullName>
        <ecNumber evidence="1">7.1.1.2</ecNumber>
    </recommendedName>
    <alternativeName>
        <fullName>NADH dehydrogenase subunit 3</fullName>
    </alternativeName>
</protein>